<accession>D2Y2G9</accession>
<protein>
    <recommendedName>
        <fullName>U3-theraphotoxin-Hhn1p</fullName>
        <shortName>U3-TRTX-Hhn1p</shortName>
    </recommendedName>
    <alternativeName>
        <fullName>Hainantoxin-VIII-8</fullName>
        <shortName>HNTX-VIII-8</shortName>
    </alternativeName>
</protein>
<name>H8H01_CYRHA</name>
<comment type="function">
    <text evidence="1">Ion channel inhibitor.</text>
</comment>
<comment type="subcellular location">
    <subcellularLocation>
        <location evidence="1">Secreted</location>
    </subcellularLocation>
</comment>
<comment type="tissue specificity">
    <text>Expressed by the venom gland.</text>
</comment>
<comment type="domain">
    <text evidence="1">The presence of a 'disulfide through disulfide knot' structurally defines this protein as a knottin.</text>
</comment>
<comment type="similarity">
    <text evidence="4">Belongs to the neurotoxin 10 (Hwtx-1) family. 51 (Hntx-8) subfamily. Hntx-8 sub-subfamily.</text>
</comment>
<proteinExistence type="evidence at transcript level"/>
<organism>
    <name type="scientific">Cyriopagopus hainanus</name>
    <name type="common">Chinese bird spider</name>
    <name type="synonym">Haplopelma hainanum</name>
    <dbReference type="NCBI Taxonomy" id="209901"/>
    <lineage>
        <taxon>Eukaryota</taxon>
        <taxon>Metazoa</taxon>
        <taxon>Ecdysozoa</taxon>
        <taxon>Arthropoda</taxon>
        <taxon>Chelicerata</taxon>
        <taxon>Arachnida</taxon>
        <taxon>Araneae</taxon>
        <taxon>Mygalomorphae</taxon>
        <taxon>Theraphosidae</taxon>
        <taxon>Haplopelma</taxon>
    </lineage>
</organism>
<keyword id="KW-1015">Disulfide bond</keyword>
<keyword id="KW-0872">Ion channel impairing toxin</keyword>
<keyword id="KW-0960">Knottin</keyword>
<keyword id="KW-0964">Secreted</keyword>
<keyword id="KW-0732">Signal</keyword>
<keyword id="KW-0800">Toxin</keyword>
<sequence length="87" mass="10141">MVNMKASMFLTFAGLVLLFVVCYASESEEKEFPKEMLSSIFAVDNDFKQEERDCAGYMRECNEKLCCSGYVCSSRWKWCVLPAPWRR</sequence>
<feature type="signal peptide" evidence="3">
    <location>
        <begin position="1"/>
        <end position="24"/>
    </location>
</feature>
<feature type="propeptide" id="PRO_0000400629" evidence="1">
    <location>
        <begin position="25"/>
        <end position="52"/>
    </location>
</feature>
<feature type="peptide" id="PRO_0000400630" description="U3-theraphotoxin-Hhn1p">
    <location>
        <begin position="53"/>
        <end position="87"/>
    </location>
</feature>
<feature type="disulfide bond" evidence="2">
    <location>
        <begin position="54"/>
        <end position="67"/>
    </location>
</feature>
<feature type="disulfide bond" evidence="2">
    <location>
        <begin position="61"/>
        <end position="72"/>
    </location>
</feature>
<feature type="disulfide bond" evidence="2">
    <location>
        <begin position="66"/>
        <end position="79"/>
    </location>
</feature>
<evidence type="ECO:0000250" key="1"/>
<evidence type="ECO:0000250" key="2">
    <source>
        <dbReference type="UniProtKB" id="B3FIS6"/>
    </source>
</evidence>
<evidence type="ECO:0000255" key="3"/>
<evidence type="ECO:0000305" key="4"/>
<reference key="1">
    <citation type="journal article" date="2010" name="J. Proteome Res.">
        <title>Molecular diversification of peptide toxins from the tarantula Haplopelma hainanum (Ornithoctonus hainana) venom based on transcriptomic, peptidomic, and genomic analyses.</title>
        <authorList>
            <person name="Tang X."/>
            <person name="Zhang Y."/>
            <person name="Hu W."/>
            <person name="Xu D."/>
            <person name="Tao H."/>
            <person name="Yang X."/>
            <person name="Li Y."/>
            <person name="Jiang L."/>
            <person name="Liang S."/>
        </authorList>
    </citation>
    <scope>NUCLEOTIDE SEQUENCE [LARGE SCALE MRNA]</scope>
    <source>
        <tissue>Venom gland</tissue>
    </source>
</reference>
<dbReference type="EMBL" id="GU293046">
    <property type="protein sequence ID" value="ADB56862.1"/>
    <property type="molecule type" value="mRNA"/>
</dbReference>
<dbReference type="SMR" id="D2Y2G9"/>
<dbReference type="ArachnoServer" id="AS001911">
    <property type="toxin name" value="U3-theraphotoxin-Hhn1p"/>
</dbReference>
<dbReference type="GO" id="GO:0005576">
    <property type="term" value="C:extracellular region"/>
    <property type="evidence" value="ECO:0007669"/>
    <property type="project" value="UniProtKB-SubCell"/>
</dbReference>
<dbReference type="GO" id="GO:0008200">
    <property type="term" value="F:ion channel inhibitor activity"/>
    <property type="evidence" value="ECO:0007669"/>
    <property type="project" value="InterPro"/>
</dbReference>
<dbReference type="GO" id="GO:0090729">
    <property type="term" value="F:toxin activity"/>
    <property type="evidence" value="ECO:0007669"/>
    <property type="project" value="UniProtKB-KW"/>
</dbReference>
<dbReference type="InterPro" id="IPR011696">
    <property type="entry name" value="Huwentoxin-1"/>
</dbReference>
<dbReference type="InterPro" id="IPR013140">
    <property type="entry name" value="Huwentoxin_CS1"/>
</dbReference>
<dbReference type="Pfam" id="PF07740">
    <property type="entry name" value="Toxin_12"/>
    <property type="match status" value="1"/>
</dbReference>
<dbReference type="SUPFAM" id="SSF57059">
    <property type="entry name" value="omega toxin-like"/>
    <property type="match status" value="1"/>
</dbReference>
<dbReference type="PROSITE" id="PS60021">
    <property type="entry name" value="HWTX_1"/>
    <property type="match status" value="1"/>
</dbReference>